<organism>
    <name type="scientific">Escherichia coli (strain UTI89 / UPEC)</name>
    <dbReference type="NCBI Taxonomy" id="364106"/>
    <lineage>
        <taxon>Bacteria</taxon>
        <taxon>Pseudomonadati</taxon>
        <taxon>Pseudomonadota</taxon>
        <taxon>Gammaproteobacteria</taxon>
        <taxon>Enterobacterales</taxon>
        <taxon>Enterobacteriaceae</taxon>
        <taxon>Escherichia</taxon>
    </lineage>
</organism>
<evidence type="ECO:0000255" key="1">
    <source>
        <dbReference type="HAMAP-Rule" id="MF_00596"/>
    </source>
</evidence>
<name>GUAC_ECOUT</name>
<gene>
    <name evidence="1" type="primary">guaC</name>
    <name type="ordered locus">UTI89_C0112</name>
</gene>
<reference key="1">
    <citation type="journal article" date="2006" name="Proc. Natl. Acad. Sci. U.S.A.">
        <title>Identification of genes subject to positive selection in uropathogenic strains of Escherichia coli: a comparative genomics approach.</title>
        <authorList>
            <person name="Chen S.L."/>
            <person name="Hung C.-S."/>
            <person name="Xu J."/>
            <person name="Reigstad C.S."/>
            <person name="Magrini V."/>
            <person name="Sabo A."/>
            <person name="Blasiar D."/>
            <person name="Bieri T."/>
            <person name="Meyer R.R."/>
            <person name="Ozersky P."/>
            <person name="Armstrong J.R."/>
            <person name="Fulton R.S."/>
            <person name="Latreille J.P."/>
            <person name="Spieth J."/>
            <person name="Hooton T.M."/>
            <person name="Mardis E.R."/>
            <person name="Hultgren S.J."/>
            <person name="Gordon J.I."/>
        </authorList>
    </citation>
    <scope>NUCLEOTIDE SEQUENCE [LARGE SCALE GENOMIC DNA]</scope>
    <source>
        <strain>UTI89 / UPEC</strain>
    </source>
</reference>
<protein>
    <recommendedName>
        <fullName evidence="1">GMP reductase</fullName>
        <ecNumber evidence="1">1.7.1.7</ecNumber>
    </recommendedName>
    <alternativeName>
        <fullName evidence="1">Guanosine 5'-monophosphate oxidoreductase</fullName>
        <shortName evidence="1">Guanosine monophosphate reductase</shortName>
    </alternativeName>
</protein>
<feature type="chain" id="PRO_1000025613" description="GMP reductase">
    <location>
        <begin position="1"/>
        <end position="347"/>
    </location>
</feature>
<feature type="active site" description="Thioimidate intermediate" evidence="1">
    <location>
        <position position="186"/>
    </location>
</feature>
<feature type="binding site" evidence="1">
    <location>
        <begin position="108"/>
        <end position="131"/>
    </location>
    <ligand>
        <name>NADP(+)</name>
        <dbReference type="ChEBI" id="CHEBI:58349"/>
    </ligand>
</feature>
<feature type="binding site" evidence="1">
    <location>
        <position position="181"/>
    </location>
    <ligand>
        <name>K(+)</name>
        <dbReference type="ChEBI" id="CHEBI:29103"/>
    </ligand>
</feature>
<feature type="binding site" evidence="1">
    <location>
        <position position="183"/>
    </location>
    <ligand>
        <name>K(+)</name>
        <dbReference type="ChEBI" id="CHEBI:29103"/>
    </ligand>
</feature>
<feature type="binding site" evidence="1">
    <location>
        <begin position="216"/>
        <end position="239"/>
    </location>
    <ligand>
        <name>NADP(+)</name>
        <dbReference type="ChEBI" id="CHEBI:58349"/>
    </ligand>
</feature>
<accession>Q1RG92</accession>
<dbReference type="EC" id="1.7.1.7" evidence="1"/>
<dbReference type="EMBL" id="CP000243">
    <property type="protein sequence ID" value="ABE05622.1"/>
    <property type="molecule type" value="Genomic_DNA"/>
</dbReference>
<dbReference type="RefSeq" id="WP_001217338.1">
    <property type="nucleotide sequence ID" value="NZ_CP064825.1"/>
</dbReference>
<dbReference type="SMR" id="Q1RG92"/>
<dbReference type="GeneID" id="93777331"/>
<dbReference type="KEGG" id="eci:UTI89_C0112"/>
<dbReference type="HOGENOM" id="CLU_022552_5_3_6"/>
<dbReference type="Proteomes" id="UP000001952">
    <property type="component" value="Chromosome"/>
</dbReference>
<dbReference type="GO" id="GO:0005829">
    <property type="term" value="C:cytosol"/>
    <property type="evidence" value="ECO:0007669"/>
    <property type="project" value="TreeGrafter"/>
</dbReference>
<dbReference type="GO" id="GO:1902560">
    <property type="term" value="C:GMP reductase complex"/>
    <property type="evidence" value="ECO:0007669"/>
    <property type="project" value="InterPro"/>
</dbReference>
<dbReference type="GO" id="GO:0003920">
    <property type="term" value="F:GMP reductase activity"/>
    <property type="evidence" value="ECO:0007669"/>
    <property type="project" value="UniProtKB-UniRule"/>
</dbReference>
<dbReference type="GO" id="GO:0046872">
    <property type="term" value="F:metal ion binding"/>
    <property type="evidence" value="ECO:0007669"/>
    <property type="project" value="UniProtKB-KW"/>
</dbReference>
<dbReference type="GO" id="GO:0006163">
    <property type="term" value="P:purine nucleotide metabolic process"/>
    <property type="evidence" value="ECO:0007669"/>
    <property type="project" value="UniProtKB-UniRule"/>
</dbReference>
<dbReference type="CDD" id="cd00381">
    <property type="entry name" value="IMPDH"/>
    <property type="match status" value="1"/>
</dbReference>
<dbReference type="FunFam" id="3.20.20.70:FF:000012">
    <property type="entry name" value="GMP reductase"/>
    <property type="match status" value="1"/>
</dbReference>
<dbReference type="Gene3D" id="3.20.20.70">
    <property type="entry name" value="Aldolase class I"/>
    <property type="match status" value="1"/>
</dbReference>
<dbReference type="HAMAP" id="MF_00596">
    <property type="entry name" value="GMP_reduct_type1"/>
    <property type="match status" value="1"/>
</dbReference>
<dbReference type="InterPro" id="IPR013785">
    <property type="entry name" value="Aldolase_TIM"/>
</dbReference>
<dbReference type="InterPro" id="IPR050139">
    <property type="entry name" value="GMP_reductase"/>
</dbReference>
<dbReference type="InterPro" id="IPR005993">
    <property type="entry name" value="GMPR"/>
</dbReference>
<dbReference type="InterPro" id="IPR015875">
    <property type="entry name" value="IMP_DH/GMP_Rdtase_CS"/>
</dbReference>
<dbReference type="InterPro" id="IPR001093">
    <property type="entry name" value="IMP_DH_GMPRt"/>
</dbReference>
<dbReference type="NCBIfam" id="TIGR01305">
    <property type="entry name" value="GMP_reduct_1"/>
    <property type="match status" value="1"/>
</dbReference>
<dbReference type="NCBIfam" id="NF003470">
    <property type="entry name" value="PRK05096.1"/>
    <property type="match status" value="1"/>
</dbReference>
<dbReference type="PANTHER" id="PTHR43170">
    <property type="entry name" value="GMP REDUCTASE"/>
    <property type="match status" value="1"/>
</dbReference>
<dbReference type="PANTHER" id="PTHR43170:SF5">
    <property type="entry name" value="GMP REDUCTASE"/>
    <property type="match status" value="1"/>
</dbReference>
<dbReference type="Pfam" id="PF00478">
    <property type="entry name" value="IMPDH"/>
    <property type="match status" value="1"/>
</dbReference>
<dbReference type="PIRSF" id="PIRSF000235">
    <property type="entry name" value="GMP_reductase"/>
    <property type="match status" value="1"/>
</dbReference>
<dbReference type="SMART" id="SM01240">
    <property type="entry name" value="IMPDH"/>
    <property type="match status" value="1"/>
</dbReference>
<dbReference type="SUPFAM" id="SSF51412">
    <property type="entry name" value="Inosine monophosphate dehydrogenase (IMPDH)"/>
    <property type="match status" value="1"/>
</dbReference>
<dbReference type="PROSITE" id="PS00487">
    <property type="entry name" value="IMP_DH_GMP_RED"/>
    <property type="match status" value="1"/>
</dbReference>
<proteinExistence type="inferred from homology"/>
<comment type="function">
    <text evidence="1">Catalyzes the irreversible NADPH-dependent deamination of GMP to IMP. It functions in the conversion of nucleobase, nucleoside and nucleotide derivatives of G to A nucleotides, and in maintaining the intracellular balance of A and G nucleotides.</text>
</comment>
<comment type="catalytic activity">
    <reaction evidence="1">
        <text>IMP + NH4(+) + NADP(+) = GMP + NADPH + 2 H(+)</text>
        <dbReference type="Rhea" id="RHEA:17185"/>
        <dbReference type="ChEBI" id="CHEBI:15378"/>
        <dbReference type="ChEBI" id="CHEBI:28938"/>
        <dbReference type="ChEBI" id="CHEBI:57783"/>
        <dbReference type="ChEBI" id="CHEBI:58053"/>
        <dbReference type="ChEBI" id="CHEBI:58115"/>
        <dbReference type="ChEBI" id="CHEBI:58349"/>
        <dbReference type="EC" id="1.7.1.7"/>
    </reaction>
</comment>
<comment type="subunit">
    <text evidence="1">Homotetramer.</text>
</comment>
<comment type="similarity">
    <text evidence="1">Belongs to the IMPDH/GMPR family. GuaC type 1 subfamily.</text>
</comment>
<sequence>MRIEEDLKLGFKDVLIRPKRSTLKSRSDVELERQFTFKHSGQSWSGVPIIAANMDTVGTFSMASALASFDILTAVHKHYSVEEWQAFINNSSADVLKHVMVSTGTSDADFEKTKQILDLNPALNFVCIDVANGYSEHFVQFVAKAREAWPTKTICAGNVVTGEMCEELILSGADIVKVGIGPGSVCTTRVKTGVGYPQLSAVIECADAAHGLGGMIVSDGGCTTPGDVAKAFGGGADFVMLGGMLAGHEESGGRIVEENGEKFMLFYGMSSESAMKRHVGGVAEYRAAEGKTVKLPLRGPVENTARDILGGLRSACTYVGASRLKELTKRTTFIRVQEQENRIFNNL</sequence>
<keyword id="KW-0479">Metal-binding</keyword>
<keyword id="KW-0521">NADP</keyword>
<keyword id="KW-0560">Oxidoreductase</keyword>
<keyword id="KW-0630">Potassium</keyword>